<organism>
    <name type="scientific">Burkholderia thailandensis (strain ATCC 700388 / DSM 13276 / CCUG 48851 / CIP 106301 / E264)</name>
    <dbReference type="NCBI Taxonomy" id="271848"/>
    <lineage>
        <taxon>Bacteria</taxon>
        <taxon>Pseudomonadati</taxon>
        <taxon>Pseudomonadota</taxon>
        <taxon>Betaproteobacteria</taxon>
        <taxon>Burkholderiales</taxon>
        <taxon>Burkholderiaceae</taxon>
        <taxon>Burkholderia</taxon>
        <taxon>pseudomallei group</taxon>
    </lineage>
</organism>
<keyword id="KW-0002">3D-structure</keyword>
<keyword id="KW-0378">Hydrolase</keyword>
<keyword id="KW-0546">Nucleotide metabolism</keyword>
<keyword id="KW-0547">Nucleotide-binding</keyword>
<protein>
    <recommendedName>
        <fullName evidence="1">dCTP deaminase</fullName>
        <ecNumber evidence="1">3.5.4.13</ecNumber>
    </recommendedName>
    <alternativeName>
        <fullName evidence="1">Deoxycytidine triphosphate deaminase</fullName>
    </alternativeName>
</protein>
<comment type="function">
    <text evidence="1">Catalyzes the deamination of dCTP to dUTP.</text>
</comment>
<comment type="catalytic activity">
    <reaction evidence="1">
        <text>dCTP + H2O + H(+) = dUTP + NH4(+)</text>
        <dbReference type="Rhea" id="RHEA:22680"/>
        <dbReference type="ChEBI" id="CHEBI:15377"/>
        <dbReference type="ChEBI" id="CHEBI:15378"/>
        <dbReference type="ChEBI" id="CHEBI:28938"/>
        <dbReference type="ChEBI" id="CHEBI:61481"/>
        <dbReference type="ChEBI" id="CHEBI:61555"/>
        <dbReference type="EC" id="3.5.4.13"/>
    </reaction>
</comment>
<comment type="pathway">
    <text evidence="1">Pyrimidine metabolism; dUMP biosynthesis; dUMP from dCTP (dUTP route): step 1/2.</text>
</comment>
<comment type="subunit">
    <text evidence="1">Homotrimer.</text>
</comment>
<comment type="similarity">
    <text evidence="1">Belongs to the dCTP deaminase family.</text>
</comment>
<reference key="1">
    <citation type="journal article" date="2005" name="BMC Genomics">
        <title>Bacterial genome adaptation to niches: divergence of the potential virulence genes in three Burkholderia species of different survival strategies.</title>
        <authorList>
            <person name="Kim H.S."/>
            <person name="Schell M.A."/>
            <person name="Yu Y."/>
            <person name="Ulrich R.L."/>
            <person name="Sarria S.H."/>
            <person name="Nierman W.C."/>
            <person name="DeShazer D."/>
        </authorList>
    </citation>
    <scope>NUCLEOTIDE SEQUENCE [LARGE SCALE GENOMIC DNA]</scope>
    <source>
        <strain>ATCC 700388 / DSM 13276 / CCUG 48851 / CIP 106301 / E264</strain>
    </source>
</reference>
<sequence length="189" mass="21340">MSIKSDKWIRRMAEEHKMIEPFVPDQVRAAEDGRRIVSYGTSSYGYDIRCADEFKIFTNINSTIVDPKNFDEGSFVDFKGDVCIIPPNSFALARTVEYFRIPRTVLTVCLGKSTYARCGIIVNVTPFEPEWEGYVTLEFSNTTPLPAKIYANEGVAQVLFFESDEVCDVSYADRGGKYQGQRGVTLPKT</sequence>
<dbReference type="EC" id="3.5.4.13" evidence="1"/>
<dbReference type="EMBL" id="CP000086">
    <property type="protein sequence ID" value="ABC37933.1"/>
    <property type="molecule type" value="Genomic_DNA"/>
</dbReference>
<dbReference type="RefSeq" id="WP_009892477.1">
    <property type="nucleotide sequence ID" value="NZ_CP008785.1"/>
</dbReference>
<dbReference type="PDB" id="4DHK">
    <property type="method" value="X-ray"/>
    <property type="resolution" value="2.05 A"/>
    <property type="chains" value="A/B=1-189"/>
</dbReference>
<dbReference type="PDBsum" id="4DHK"/>
<dbReference type="SMR" id="Q2T083"/>
<dbReference type="GeneID" id="45120615"/>
<dbReference type="KEGG" id="bte:BTH_I0860"/>
<dbReference type="HOGENOM" id="CLU_087476_4_0_4"/>
<dbReference type="UniPathway" id="UPA00610">
    <property type="reaction ID" value="UER00665"/>
</dbReference>
<dbReference type="EvolutionaryTrace" id="Q2T083"/>
<dbReference type="Proteomes" id="UP000001930">
    <property type="component" value="Chromosome I"/>
</dbReference>
<dbReference type="GO" id="GO:0008829">
    <property type="term" value="F:dCTP deaminase activity"/>
    <property type="evidence" value="ECO:0007669"/>
    <property type="project" value="UniProtKB-UniRule"/>
</dbReference>
<dbReference type="GO" id="GO:0000166">
    <property type="term" value="F:nucleotide binding"/>
    <property type="evidence" value="ECO:0007669"/>
    <property type="project" value="UniProtKB-KW"/>
</dbReference>
<dbReference type="GO" id="GO:0006226">
    <property type="term" value="P:dUMP biosynthetic process"/>
    <property type="evidence" value="ECO:0007669"/>
    <property type="project" value="UniProtKB-UniPathway"/>
</dbReference>
<dbReference type="GO" id="GO:0006229">
    <property type="term" value="P:dUTP biosynthetic process"/>
    <property type="evidence" value="ECO:0007669"/>
    <property type="project" value="UniProtKB-UniRule"/>
</dbReference>
<dbReference type="GO" id="GO:0015949">
    <property type="term" value="P:nucleobase-containing small molecule interconversion"/>
    <property type="evidence" value="ECO:0007669"/>
    <property type="project" value="TreeGrafter"/>
</dbReference>
<dbReference type="CDD" id="cd07557">
    <property type="entry name" value="trimeric_dUTPase"/>
    <property type="match status" value="1"/>
</dbReference>
<dbReference type="FunFam" id="2.70.40.10:FF:000001">
    <property type="entry name" value="dCTP deaminase"/>
    <property type="match status" value="1"/>
</dbReference>
<dbReference type="Gene3D" id="2.70.40.10">
    <property type="match status" value="1"/>
</dbReference>
<dbReference type="HAMAP" id="MF_00146">
    <property type="entry name" value="dCTP_deaminase"/>
    <property type="match status" value="1"/>
</dbReference>
<dbReference type="InterPro" id="IPR011962">
    <property type="entry name" value="dCTP_deaminase"/>
</dbReference>
<dbReference type="InterPro" id="IPR036157">
    <property type="entry name" value="dUTPase-like_sf"/>
</dbReference>
<dbReference type="InterPro" id="IPR033704">
    <property type="entry name" value="dUTPase_trimeric"/>
</dbReference>
<dbReference type="NCBIfam" id="TIGR02274">
    <property type="entry name" value="dCTP_deam"/>
    <property type="match status" value="1"/>
</dbReference>
<dbReference type="PANTHER" id="PTHR42680">
    <property type="entry name" value="DCTP DEAMINASE"/>
    <property type="match status" value="1"/>
</dbReference>
<dbReference type="PANTHER" id="PTHR42680:SF3">
    <property type="entry name" value="DCTP DEAMINASE"/>
    <property type="match status" value="1"/>
</dbReference>
<dbReference type="Pfam" id="PF22769">
    <property type="entry name" value="DCD"/>
    <property type="match status" value="1"/>
</dbReference>
<dbReference type="SUPFAM" id="SSF51283">
    <property type="entry name" value="dUTPase-like"/>
    <property type="match status" value="1"/>
</dbReference>
<proteinExistence type="evidence at protein level"/>
<name>DCD_BURTA</name>
<evidence type="ECO:0000255" key="1">
    <source>
        <dbReference type="HAMAP-Rule" id="MF_00146"/>
    </source>
</evidence>
<evidence type="ECO:0007829" key="2">
    <source>
        <dbReference type="PDB" id="4DHK"/>
    </source>
</evidence>
<accession>Q2T083</accession>
<feature type="chain" id="PRO_1000009695" description="dCTP deaminase">
    <location>
        <begin position="1"/>
        <end position="189"/>
    </location>
</feature>
<feature type="active site" description="Proton donor/acceptor" evidence="1">
    <location>
        <position position="138"/>
    </location>
</feature>
<feature type="binding site" evidence="1">
    <location>
        <begin position="112"/>
        <end position="117"/>
    </location>
    <ligand>
        <name>dCTP</name>
        <dbReference type="ChEBI" id="CHEBI:61481"/>
    </ligand>
</feature>
<feature type="binding site" evidence="1">
    <location>
        <begin position="136"/>
        <end position="138"/>
    </location>
    <ligand>
        <name>dCTP</name>
        <dbReference type="ChEBI" id="CHEBI:61481"/>
    </ligand>
</feature>
<feature type="binding site" evidence="1">
    <location>
        <position position="157"/>
    </location>
    <ligand>
        <name>dCTP</name>
        <dbReference type="ChEBI" id="CHEBI:61481"/>
    </ligand>
</feature>
<feature type="binding site" evidence="1">
    <location>
        <position position="171"/>
    </location>
    <ligand>
        <name>dCTP</name>
        <dbReference type="ChEBI" id="CHEBI:61481"/>
    </ligand>
</feature>
<feature type="binding site" evidence="1">
    <location>
        <position position="181"/>
    </location>
    <ligand>
        <name>dCTP</name>
        <dbReference type="ChEBI" id="CHEBI:61481"/>
    </ligand>
</feature>
<feature type="helix" evidence="2">
    <location>
        <begin position="6"/>
        <end position="16"/>
    </location>
</feature>
<feature type="strand" evidence="2">
    <location>
        <begin position="19"/>
        <end position="21"/>
    </location>
</feature>
<feature type="strand" evidence="2">
    <location>
        <begin position="24"/>
        <end position="29"/>
    </location>
</feature>
<feature type="strand" evidence="2">
    <location>
        <begin position="35"/>
        <end position="42"/>
    </location>
</feature>
<feature type="strand" evidence="2">
    <location>
        <begin position="45"/>
        <end position="50"/>
    </location>
</feature>
<feature type="strand" evidence="2">
    <location>
        <begin position="52"/>
        <end position="57"/>
    </location>
</feature>
<feature type="helix" evidence="2">
    <location>
        <begin position="72"/>
        <end position="74"/>
    </location>
</feature>
<feature type="strand" evidence="2">
    <location>
        <begin position="75"/>
        <end position="85"/>
    </location>
</feature>
<feature type="strand" evidence="2">
    <location>
        <begin position="89"/>
        <end position="100"/>
    </location>
</feature>
<feature type="strand" evidence="2">
    <location>
        <begin position="105"/>
        <end position="111"/>
    </location>
</feature>
<feature type="helix" evidence="2">
    <location>
        <begin position="113"/>
        <end position="116"/>
    </location>
</feature>
<feature type="turn" evidence="2">
    <location>
        <begin position="117"/>
        <end position="119"/>
    </location>
</feature>
<feature type="strand" evidence="2">
    <location>
        <begin position="120"/>
        <end position="123"/>
    </location>
</feature>
<feature type="strand" evidence="2">
    <location>
        <begin position="132"/>
        <end position="141"/>
    </location>
</feature>
<feature type="strand" evidence="2">
    <location>
        <begin position="143"/>
        <end position="145"/>
    </location>
</feature>
<feature type="strand" evidence="2">
    <location>
        <begin position="147"/>
        <end position="150"/>
    </location>
</feature>
<feature type="strand" evidence="2">
    <location>
        <begin position="153"/>
        <end position="162"/>
    </location>
</feature>
<gene>
    <name evidence="1" type="primary">dcd</name>
    <name type="ordered locus">BTH_I0860</name>
</gene>